<dbReference type="EMBL" id="AC097778">
    <property type="status" value="NOT_ANNOTATED_CDS"/>
    <property type="molecule type" value="Genomic_DNA"/>
</dbReference>
<dbReference type="EMBL" id="CH473993">
    <property type="protein sequence ID" value="EDL78457.1"/>
    <property type="molecule type" value="Genomic_DNA"/>
</dbReference>
<dbReference type="EMBL" id="KX236133">
    <property type="protein sequence ID" value="ANW48057.1"/>
    <property type="molecule type" value="mRNA"/>
</dbReference>
<dbReference type="RefSeq" id="NP_001385730.1">
    <property type="nucleotide sequence ID" value="NM_001398801.1"/>
</dbReference>
<dbReference type="RefSeq" id="XP_017451453.1">
    <property type="nucleotide sequence ID" value="XM_017595964.1"/>
</dbReference>
<dbReference type="RefSeq" id="XP_017459057.1">
    <property type="nucleotide sequence ID" value="XM_017603568.1"/>
</dbReference>
<dbReference type="RefSeq" id="XP_063122231.1">
    <property type="nucleotide sequence ID" value="XM_063266161.1"/>
</dbReference>
<dbReference type="SMR" id="F1M928"/>
<dbReference type="FunCoup" id="F1M928">
    <property type="interactions" value="1"/>
</dbReference>
<dbReference type="STRING" id="10116.ENSRNOP00000048978"/>
<dbReference type="GlyGen" id="F1M928">
    <property type="glycosylation" value="1 site"/>
</dbReference>
<dbReference type="PaxDb" id="10116-ENSRNOP00000048978"/>
<dbReference type="Ensembl" id="ENSRNOT00000051471.7">
    <property type="protein sequence ID" value="ENSRNOP00000048978.4"/>
    <property type="gene ID" value="ENSRNOG00000019894.9"/>
</dbReference>
<dbReference type="Ensembl" id="ENSRNOT00055011517">
    <property type="protein sequence ID" value="ENSRNOP00055009055"/>
    <property type="gene ID" value="ENSRNOG00055006985"/>
</dbReference>
<dbReference type="Ensembl" id="ENSRNOT00060009378">
    <property type="protein sequence ID" value="ENSRNOP00060007052"/>
    <property type="gene ID" value="ENSRNOG00060005645"/>
</dbReference>
<dbReference type="Ensembl" id="ENSRNOT00065019591">
    <property type="protein sequence ID" value="ENSRNOP00065015023"/>
    <property type="gene ID" value="ENSRNOG00065012049"/>
</dbReference>
<dbReference type="GeneID" id="690037"/>
<dbReference type="AGR" id="RGD:1585174"/>
<dbReference type="RGD" id="1585174">
    <property type="gene designation" value="Izumo1r"/>
</dbReference>
<dbReference type="eggNOG" id="ENOG502RYYP">
    <property type="taxonomic scope" value="Eukaryota"/>
</dbReference>
<dbReference type="GeneTree" id="ENSGT00950000183144"/>
<dbReference type="HOGENOM" id="CLU_070826_1_0_1"/>
<dbReference type="OMA" id="NAPLCQE"/>
<dbReference type="OrthoDB" id="567542at2759"/>
<dbReference type="TreeFam" id="TF328532"/>
<dbReference type="Reactome" id="R-RNO-163125">
    <property type="pathway name" value="Post-translational modification: synthesis of GPI-anchored proteins"/>
</dbReference>
<dbReference type="Proteomes" id="UP000002494">
    <property type="component" value="Chromosome 8"/>
</dbReference>
<dbReference type="Proteomes" id="UP000234681">
    <property type="component" value="Chromosome 8"/>
</dbReference>
<dbReference type="Bgee" id="ENSRNOG00000019894">
    <property type="expression patterns" value="Expressed in ileum and 7 other cell types or tissues"/>
</dbReference>
<dbReference type="GO" id="GO:0009897">
    <property type="term" value="C:external side of plasma membrane"/>
    <property type="evidence" value="ECO:0000318"/>
    <property type="project" value="GO_Central"/>
</dbReference>
<dbReference type="GO" id="GO:0031528">
    <property type="term" value="C:microvillus membrane"/>
    <property type="evidence" value="ECO:0007669"/>
    <property type="project" value="UniProtKB-SubCell"/>
</dbReference>
<dbReference type="GO" id="GO:0005886">
    <property type="term" value="C:plasma membrane"/>
    <property type="evidence" value="ECO:0000314"/>
    <property type="project" value="UniProtKB"/>
</dbReference>
<dbReference type="GO" id="GO:0086080">
    <property type="term" value="F:protein binding involved in heterotypic cell-cell adhesion"/>
    <property type="evidence" value="ECO:0000266"/>
    <property type="project" value="RGD"/>
</dbReference>
<dbReference type="GO" id="GO:0038023">
    <property type="term" value="F:signaling receptor activity"/>
    <property type="evidence" value="ECO:0000266"/>
    <property type="project" value="RGD"/>
</dbReference>
<dbReference type="GO" id="GO:0005102">
    <property type="term" value="F:signaling receptor binding"/>
    <property type="evidence" value="ECO:0000266"/>
    <property type="project" value="RGD"/>
</dbReference>
<dbReference type="GO" id="GO:0007155">
    <property type="term" value="P:cell adhesion"/>
    <property type="evidence" value="ECO:0000266"/>
    <property type="project" value="RGD"/>
</dbReference>
<dbReference type="GO" id="GO:0007342">
    <property type="term" value="P:fusion of sperm to egg plasma membrane involved in single fertilization"/>
    <property type="evidence" value="ECO:0000250"/>
    <property type="project" value="UniProtKB"/>
</dbReference>
<dbReference type="GO" id="GO:0007338">
    <property type="term" value="P:single fertilization"/>
    <property type="evidence" value="ECO:0000250"/>
    <property type="project" value="UniProtKB"/>
</dbReference>
<dbReference type="GO" id="GO:0035036">
    <property type="term" value="P:sperm-egg recognition"/>
    <property type="evidence" value="ECO:0000266"/>
    <property type="project" value="RGD"/>
</dbReference>
<dbReference type="InterPro" id="IPR004269">
    <property type="entry name" value="Folate_rcpt"/>
</dbReference>
<dbReference type="InterPro" id="IPR018143">
    <property type="entry name" value="Folate_rcpt-like"/>
</dbReference>
<dbReference type="PANTHER" id="PTHR10517">
    <property type="entry name" value="FOLATE RECEPTOR"/>
    <property type="match status" value="1"/>
</dbReference>
<dbReference type="PANTHER" id="PTHR10517:SF10">
    <property type="entry name" value="SPERM-EGG FUSION PROTEIN JUNO"/>
    <property type="match status" value="1"/>
</dbReference>
<dbReference type="Pfam" id="PF03024">
    <property type="entry name" value="Folate_rec"/>
    <property type="match status" value="1"/>
</dbReference>
<sequence>MAQWWLILLGLWTVLPSLAGGKLLNVCMNSKHHKQEPGPEDKLYFECMPWKDNACCTRDTSWEAHLDEPLLFNFSMTHCGLLTPLCHKHFIQAICFYECSPNLGPWIQPVVPNRQEEQRLWDVPLCLEDCEEWWKDCRTSHTCKADWLHGWVWDQGKNGCPAHAPCLPFSDYFPTPADLCEKIWNNTFKASPERRNSGRCLQKWFEPTHGNPNVEVALHFAGSASAPQLSYSITAFSLCLLLHA</sequence>
<accession>F1M928</accession>
<accession>A0A1B1W5N3</accession>
<accession>A6JNA9</accession>
<organism>
    <name type="scientific">Rattus norvegicus</name>
    <name type="common">Rat</name>
    <dbReference type="NCBI Taxonomy" id="10116"/>
    <lineage>
        <taxon>Eukaryota</taxon>
        <taxon>Metazoa</taxon>
        <taxon>Chordata</taxon>
        <taxon>Craniata</taxon>
        <taxon>Vertebrata</taxon>
        <taxon>Euteleostomi</taxon>
        <taxon>Mammalia</taxon>
        <taxon>Eutheria</taxon>
        <taxon>Euarchontoglires</taxon>
        <taxon>Glires</taxon>
        <taxon>Rodentia</taxon>
        <taxon>Myomorpha</taxon>
        <taxon>Muroidea</taxon>
        <taxon>Muridae</taxon>
        <taxon>Murinae</taxon>
        <taxon>Rattus</taxon>
    </lineage>
</organism>
<name>JUNO_RAT</name>
<evidence type="ECO:0000250" key="1">
    <source>
        <dbReference type="UniProtKB" id="A6ND01"/>
    </source>
</evidence>
<evidence type="ECO:0000250" key="2">
    <source>
        <dbReference type="UniProtKB" id="Q9EQF4"/>
    </source>
</evidence>
<evidence type="ECO:0000255" key="3"/>
<evidence type="ECO:0000269" key="4">
    <source>
    </source>
</evidence>
<evidence type="ECO:0000303" key="5">
    <source>
    </source>
</evidence>
<evidence type="ECO:0000305" key="6"/>
<proteinExistence type="evidence at protein level"/>
<reference key="1">
    <citation type="journal article" date="2004" name="Nature">
        <title>Genome sequence of the Brown Norway rat yields insights into mammalian evolution.</title>
        <authorList>
            <person name="Gibbs R.A."/>
            <person name="Weinstock G.M."/>
            <person name="Metzker M.L."/>
            <person name="Muzny D.M."/>
            <person name="Sodergren E.J."/>
            <person name="Scherer S."/>
            <person name="Scott G."/>
            <person name="Steffen D."/>
            <person name="Worley K.C."/>
            <person name="Burch P.E."/>
            <person name="Okwuonu G."/>
            <person name="Hines S."/>
            <person name="Lewis L."/>
            <person name="Deramo C."/>
            <person name="Delgado O."/>
            <person name="Dugan-Rocha S."/>
            <person name="Miner G."/>
            <person name="Morgan M."/>
            <person name="Hawes A."/>
            <person name="Gill R."/>
            <person name="Holt R.A."/>
            <person name="Adams M.D."/>
            <person name="Amanatides P.G."/>
            <person name="Baden-Tillson H."/>
            <person name="Barnstead M."/>
            <person name="Chin S."/>
            <person name="Evans C.A."/>
            <person name="Ferriera S."/>
            <person name="Fosler C."/>
            <person name="Glodek A."/>
            <person name="Gu Z."/>
            <person name="Jennings D."/>
            <person name="Kraft C.L."/>
            <person name="Nguyen T."/>
            <person name="Pfannkoch C.M."/>
            <person name="Sitter C."/>
            <person name="Sutton G.G."/>
            <person name="Venter J.C."/>
            <person name="Woodage T."/>
            <person name="Smith D."/>
            <person name="Lee H.-M."/>
            <person name="Gustafson E."/>
            <person name="Cahill P."/>
            <person name="Kana A."/>
            <person name="Doucette-Stamm L."/>
            <person name="Weinstock K."/>
            <person name="Fechtel K."/>
            <person name="Weiss R.B."/>
            <person name="Dunn D.M."/>
            <person name="Green E.D."/>
            <person name="Blakesley R.W."/>
            <person name="Bouffard G.G."/>
            <person name="De Jong P.J."/>
            <person name="Osoegawa K."/>
            <person name="Zhu B."/>
            <person name="Marra M."/>
            <person name="Schein J."/>
            <person name="Bosdet I."/>
            <person name="Fjell C."/>
            <person name="Jones S."/>
            <person name="Krzywinski M."/>
            <person name="Mathewson C."/>
            <person name="Siddiqui A."/>
            <person name="Wye N."/>
            <person name="McPherson J."/>
            <person name="Zhao S."/>
            <person name="Fraser C.M."/>
            <person name="Shetty J."/>
            <person name="Shatsman S."/>
            <person name="Geer K."/>
            <person name="Chen Y."/>
            <person name="Abramzon S."/>
            <person name="Nierman W.C."/>
            <person name="Havlak P.H."/>
            <person name="Chen R."/>
            <person name="Durbin K.J."/>
            <person name="Egan A."/>
            <person name="Ren Y."/>
            <person name="Song X.-Z."/>
            <person name="Li B."/>
            <person name="Liu Y."/>
            <person name="Qin X."/>
            <person name="Cawley S."/>
            <person name="Cooney A.J."/>
            <person name="D'Souza L.M."/>
            <person name="Martin K."/>
            <person name="Wu J.Q."/>
            <person name="Gonzalez-Garay M.L."/>
            <person name="Jackson A.R."/>
            <person name="Kalafus K.J."/>
            <person name="McLeod M.P."/>
            <person name="Milosavljevic A."/>
            <person name="Virk D."/>
            <person name="Volkov A."/>
            <person name="Wheeler D.A."/>
            <person name="Zhang Z."/>
            <person name="Bailey J.A."/>
            <person name="Eichler E.E."/>
            <person name="Tuzun E."/>
            <person name="Birney E."/>
            <person name="Mongin E."/>
            <person name="Ureta-Vidal A."/>
            <person name="Woodwark C."/>
            <person name="Zdobnov E."/>
            <person name="Bork P."/>
            <person name="Suyama M."/>
            <person name="Torrents D."/>
            <person name="Alexandersson M."/>
            <person name="Trask B.J."/>
            <person name="Young J.M."/>
            <person name="Huang H."/>
            <person name="Wang H."/>
            <person name="Xing H."/>
            <person name="Daniels S."/>
            <person name="Gietzen D."/>
            <person name="Schmidt J."/>
            <person name="Stevens K."/>
            <person name="Vitt U."/>
            <person name="Wingrove J."/>
            <person name="Camara F."/>
            <person name="Mar Alba M."/>
            <person name="Abril J.F."/>
            <person name="Guigo R."/>
            <person name="Smit A."/>
            <person name="Dubchak I."/>
            <person name="Rubin E.M."/>
            <person name="Couronne O."/>
            <person name="Poliakov A."/>
            <person name="Huebner N."/>
            <person name="Ganten D."/>
            <person name="Goesele C."/>
            <person name="Hummel O."/>
            <person name="Kreitler T."/>
            <person name="Lee Y.-A."/>
            <person name="Monti J."/>
            <person name="Schulz H."/>
            <person name="Zimdahl H."/>
            <person name="Himmelbauer H."/>
            <person name="Lehrach H."/>
            <person name="Jacob H.J."/>
            <person name="Bromberg S."/>
            <person name="Gullings-Handley J."/>
            <person name="Jensen-Seaman M.I."/>
            <person name="Kwitek A.E."/>
            <person name="Lazar J."/>
            <person name="Pasko D."/>
            <person name="Tonellato P.J."/>
            <person name="Twigger S."/>
            <person name="Ponting C.P."/>
            <person name="Duarte J.M."/>
            <person name="Rice S."/>
            <person name="Goodstadt L."/>
            <person name="Beatson S.A."/>
            <person name="Emes R.D."/>
            <person name="Winter E.E."/>
            <person name="Webber C."/>
            <person name="Brandt P."/>
            <person name="Nyakatura G."/>
            <person name="Adetobi M."/>
            <person name="Chiaromonte F."/>
            <person name="Elnitski L."/>
            <person name="Eswara P."/>
            <person name="Hardison R.C."/>
            <person name="Hou M."/>
            <person name="Kolbe D."/>
            <person name="Makova K."/>
            <person name="Miller W."/>
            <person name="Nekrutenko A."/>
            <person name="Riemer C."/>
            <person name="Schwartz S."/>
            <person name="Taylor J."/>
            <person name="Yang S."/>
            <person name="Zhang Y."/>
            <person name="Lindpaintner K."/>
            <person name="Andrews T.D."/>
            <person name="Caccamo M."/>
            <person name="Clamp M."/>
            <person name="Clarke L."/>
            <person name="Curwen V."/>
            <person name="Durbin R.M."/>
            <person name="Eyras E."/>
            <person name="Searle S.M."/>
            <person name="Cooper G.M."/>
            <person name="Batzoglou S."/>
            <person name="Brudno M."/>
            <person name="Sidow A."/>
            <person name="Stone E.A."/>
            <person name="Payseur B.A."/>
            <person name="Bourque G."/>
            <person name="Lopez-Otin C."/>
            <person name="Puente X.S."/>
            <person name="Chakrabarti K."/>
            <person name="Chatterji S."/>
            <person name="Dewey C."/>
            <person name="Pachter L."/>
            <person name="Bray N."/>
            <person name="Yap V.B."/>
            <person name="Caspi A."/>
            <person name="Tesler G."/>
            <person name="Pevzner P.A."/>
            <person name="Haussler D."/>
            <person name="Roskin K.M."/>
            <person name="Baertsch R."/>
            <person name="Clawson H."/>
            <person name="Furey T.S."/>
            <person name="Hinrichs A.S."/>
            <person name="Karolchik D."/>
            <person name="Kent W.J."/>
            <person name="Rosenbloom K.R."/>
            <person name="Trumbower H."/>
            <person name="Weirauch M."/>
            <person name="Cooper D.N."/>
            <person name="Stenson P.D."/>
            <person name="Ma B."/>
            <person name="Brent M."/>
            <person name="Arumugam M."/>
            <person name="Shteynberg D."/>
            <person name="Copley R.R."/>
            <person name="Taylor M.S."/>
            <person name="Riethman H."/>
            <person name="Mudunuri U."/>
            <person name="Peterson J."/>
            <person name="Guyer M."/>
            <person name="Felsenfeld A."/>
            <person name="Old S."/>
            <person name="Mockrin S."/>
            <person name="Collins F.S."/>
        </authorList>
    </citation>
    <scope>NUCLEOTIDE SEQUENCE [LARGE SCALE GENOMIC DNA]</scope>
    <source>
        <strain>Brown Norway</strain>
    </source>
</reference>
<reference key="2">
    <citation type="submission" date="2005-09" db="EMBL/GenBank/DDBJ databases">
        <authorList>
            <person name="Mural R.J."/>
            <person name="Li P.W."/>
            <person name="Adams M.D."/>
            <person name="Amanatides P.G."/>
            <person name="Baden-Tillson H."/>
            <person name="Barnstead M."/>
            <person name="Chin S.H."/>
            <person name="Dew I."/>
            <person name="Evans C.A."/>
            <person name="Ferriera S."/>
            <person name="Flanigan M."/>
            <person name="Fosler C."/>
            <person name="Glodek A."/>
            <person name="Gu Z."/>
            <person name="Holt R.A."/>
            <person name="Jennings D."/>
            <person name="Kraft C.L."/>
            <person name="Lu F."/>
            <person name="Nguyen T."/>
            <person name="Nusskern D.R."/>
            <person name="Pfannkoch C.M."/>
            <person name="Sitter C."/>
            <person name="Sutton G.G."/>
            <person name="Venter J.C."/>
            <person name="Wang Z."/>
            <person name="Woodage T."/>
            <person name="Zheng X.H."/>
            <person name="Zhong F."/>
        </authorList>
    </citation>
    <scope>NUCLEOTIDE SEQUENCE [LARGE SCALE GENOMIC DNA]</scope>
    <source>
        <strain>Brown Norway</strain>
    </source>
</reference>
<reference key="3">
    <citation type="submission" date="2016-05" db="EMBL/GenBank/DDBJ databases">
        <authorList>
            <person name="Lavstsen T."/>
            <person name="Jespersen J.S."/>
        </authorList>
    </citation>
    <scope>NUCLEOTIDE SEQUENCE [MRNA] OF 22-222</scope>
    <source>
        <tissue>Ovary</tissue>
    </source>
</reference>
<reference key="4">
    <citation type="journal article" date="2024" name="Theriogenology">
        <title>Participation of WD repeat-containing protein 54 (WDR54) in rat sperm-oocyte fusion through interaction with both IZUMO1 and JUNO.</title>
        <authorList>
            <person name="Lai X."/>
            <person name="Liu R."/>
            <person name="Li M."/>
            <person name="Fan Y."/>
            <person name="Li H."/>
            <person name="Han G."/>
            <person name="Guo R."/>
            <person name="Ma H."/>
            <person name="Su H."/>
            <person name="Xing W."/>
        </authorList>
    </citation>
    <scope>INTERACTION WITH WDR54</scope>
    <scope>SUBCELLULAR LOCATION</scope>
    <scope>TISSUE SPECIFICITY</scope>
</reference>
<feature type="signal peptide" evidence="3">
    <location>
        <begin position="1"/>
        <end position="19"/>
    </location>
</feature>
<feature type="chain" id="PRO_0000461601" description="Sperm-egg fusion protein Juno">
    <location>
        <begin position="20"/>
        <end position="222"/>
    </location>
</feature>
<feature type="propeptide" id="PRO_0000461602" evidence="3">
    <location>
        <begin position="223"/>
        <end position="244"/>
    </location>
</feature>
<feature type="region of interest" description="Important for interaction with IZUMO1" evidence="1">
    <location>
        <begin position="62"/>
        <end position="81"/>
    </location>
</feature>
<feature type="glycosylation site" description="N-linked (GlcNAc...) asparagine" evidence="3">
    <location>
        <position position="73"/>
    </location>
</feature>
<feature type="disulfide bond" evidence="1">
    <location>
        <begin position="27"/>
        <end position="55"/>
    </location>
</feature>
<feature type="disulfide bond" evidence="1">
    <location>
        <begin position="47"/>
        <end position="95"/>
    </location>
</feature>
<feature type="disulfide bond" evidence="1">
    <location>
        <begin position="56"/>
        <end position="99"/>
    </location>
</feature>
<feature type="disulfide bond" evidence="1">
    <location>
        <begin position="79"/>
        <end position="166"/>
    </location>
</feature>
<feature type="disulfide bond" evidence="1">
    <location>
        <begin position="86"/>
        <end position="137"/>
    </location>
</feature>
<feature type="disulfide bond" evidence="1">
    <location>
        <begin position="126"/>
        <end position="200"/>
    </location>
</feature>
<feature type="disulfide bond" evidence="1">
    <location>
        <begin position="130"/>
        <end position="180"/>
    </location>
</feature>
<feature type="disulfide bond" evidence="1">
    <location>
        <begin position="143"/>
        <end position="160"/>
    </location>
</feature>
<keyword id="KW-1003">Cell membrane</keyword>
<keyword id="KW-0966">Cell projection</keyword>
<keyword id="KW-1015">Disulfide bond</keyword>
<keyword id="KW-0278">Fertilization</keyword>
<keyword id="KW-0325">Glycoprotein</keyword>
<keyword id="KW-0336">GPI-anchor</keyword>
<keyword id="KW-0449">Lipoprotein</keyword>
<keyword id="KW-0472">Membrane</keyword>
<keyword id="KW-0675">Receptor</keyword>
<keyword id="KW-1185">Reference proteome</keyword>
<keyword id="KW-0732">Signal</keyword>
<gene>
    <name type="primary">Izumo1r</name>
    <name type="synonym">Folr4</name>
    <name evidence="5" type="synonym">JUNO</name>
</gene>
<comment type="function">
    <text evidence="2">Receptor for IZUMO1 present at the cell surface of oocytes (oolemma), which is essential for species-specific gamete recognition and fertilization. The IZUMO1:IZUMO1R/JUNO interaction is a necessary adhesion event between sperm and egg that is required for fertilization but is not sufficient for cell fusion. The ligand-receptor interaction probably does not act as a membrane 'fusogen'. Does not bind folate.</text>
</comment>
<comment type="subunit">
    <text evidence="1 4">Monomer. Interacts with IZUMO1; the interaction is direct. IZUMO1 and IZUMO1R/JUNO form a complex with 1:1 stoichiometry. Interacts with FCRL3/MAIA; FCRL3/MAIA replaces IZUMO1R/JUNO as IZUMO1 receptor after sperm-egg adhesion, thereby permitting species-specific gamete fusion (By similarity). Interacts with WDR54 (PubMed:37951137).</text>
</comment>
<comment type="subcellular location">
    <subcellularLocation>
        <location evidence="4">Cell membrane</location>
        <topology evidence="2">Lipid-anchor</topology>
        <topology evidence="2">GPI-anchor</topology>
    </subcellularLocation>
    <subcellularLocation>
        <location evidence="1">Cell projection</location>
        <location evidence="1">Microvillus membrane</location>
        <topology evidence="2">Lipid-anchor</topology>
        <topology evidence="2">GPI-anchor</topology>
    </subcellularLocation>
    <text evidence="2">GPI-anchored at the oolemma microvilli.</text>
</comment>
<comment type="tissue specificity">
    <text evidence="4">Expressed in the oocyte (at protein level).</text>
</comment>
<comment type="PTM">
    <text evidence="2">The protein is rapidly cleaved following fertilization, being only weakly detectable in zona-intact fertilized eggs at telophase II and undetectable at the pronuclear stage. Sheding is probably required to block to polyspermy and ensuring egg fusion with a single sperm.</text>
</comment>
<comment type="similarity">
    <text evidence="6">Belongs to the folate receptor family.</text>
</comment>
<protein>
    <recommendedName>
        <fullName>Sperm-egg fusion protein Juno</fullName>
    </recommendedName>
    <alternativeName>
        <fullName>Folate receptor 4</fullName>
    </alternativeName>
    <alternativeName>
        <fullName>Folate receptor delta</fullName>
        <shortName>FR-delta</shortName>
    </alternativeName>
    <alternativeName>
        <fullName>IZUMO1 receptor protein JUNO</fullName>
    </alternativeName>
</protein>